<reference key="1">
    <citation type="journal article" date="2000" name="DNA Res.">
        <title>Structural analysis of Arabidopsis thaliana chromosome 3. II. Sequence features of the 4,251,695 bp regions covered by 90 P1, TAC and BAC clones.</title>
        <authorList>
            <person name="Kaneko T."/>
            <person name="Katoh T."/>
            <person name="Sato S."/>
            <person name="Nakamura Y."/>
            <person name="Asamizu E."/>
            <person name="Tabata S."/>
        </authorList>
    </citation>
    <scope>NUCLEOTIDE SEQUENCE [LARGE SCALE GENOMIC DNA]</scope>
    <source>
        <strain>cv. Columbia</strain>
    </source>
</reference>
<reference key="2">
    <citation type="journal article" date="2017" name="Plant J.">
        <title>Araport11: a complete reannotation of the Arabidopsis thaliana reference genome.</title>
        <authorList>
            <person name="Cheng C.Y."/>
            <person name="Krishnakumar V."/>
            <person name="Chan A.P."/>
            <person name="Thibaud-Nissen F."/>
            <person name="Schobel S."/>
            <person name="Town C.D."/>
        </authorList>
    </citation>
    <scope>GENOME REANNOTATION</scope>
    <source>
        <strain>cv. Columbia</strain>
    </source>
</reference>
<reference key="3">
    <citation type="journal article" date="2003" name="Science">
        <title>Empirical analysis of transcriptional activity in the Arabidopsis genome.</title>
        <authorList>
            <person name="Yamada K."/>
            <person name="Lim J."/>
            <person name="Dale J.M."/>
            <person name="Chen H."/>
            <person name="Shinn P."/>
            <person name="Palm C.J."/>
            <person name="Southwick A.M."/>
            <person name="Wu H.C."/>
            <person name="Kim C.J."/>
            <person name="Nguyen M."/>
            <person name="Pham P.K."/>
            <person name="Cheuk R.F."/>
            <person name="Karlin-Newmann G."/>
            <person name="Liu S.X."/>
            <person name="Lam B."/>
            <person name="Sakano H."/>
            <person name="Wu T."/>
            <person name="Yu G."/>
            <person name="Miranda M."/>
            <person name="Quach H.L."/>
            <person name="Tripp M."/>
            <person name="Chang C.H."/>
            <person name="Lee J.M."/>
            <person name="Toriumi M.J."/>
            <person name="Chan M.M."/>
            <person name="Tang C.C."/>
            <person name="Onodera C.S."/>
            <person name="Deng J.M."/>
            <person name="Akiyama K."/>
            <person name="Ansari Y."/>
            <person name="Arakawa T."/>
            <person name="Banh J."/>
            <person name="Banno F."/>
            <person name="Bowser L."/>
            <person name="Brooks S.Y."/>
            <person name="Carninci P."/>
            <person name="Chao Q."/>
            <person name="Choy N."/>
            <person name="Enju A."/>
            <person name="Goldsmith A.D."/>
            <person name="Gurjal M."/>
            <person name="Hansen N.F."/>
            <person name="Hayashizaki Y."/>
            <person name="Johnson-Hopson C."/>
            <person name="Hsuan V.W."/>
            <person name="Iida K."/>
            <person name="Karnes M."/>
            <person name="Khan S."/>
            <person name="Koesema E."/>
            <person name="Ishida J."/>
            <person name="Jiang P.X."/>
            <person name="Jones T."/>
            <person name="Kawai J."/>
            <person name="Kamiya A."/>
            <person name="Meyers C."/>
            <person name="Nakajima M."/>
            <person name="Narusaka M."/>
            <person name="Seki M."/>
            <person name="Sakurai T."/>
            <person name="Satou M."/>
            <person name="Tamse R."/>
            <person name="Vaysberg M."/>
            <person name="Wallender E.K."/>
            <person name="Wong C."/>
            <person name="Yamamura Y."/>
            <person name="Yuan S."/>
            <person name="Shinozaki K."/>
            <person name="Davis R.W."/>
            <person name="Theologis A."/>
            <person name="Ecker J.R."/>
        </authorList>
    </citation>
    <scope>NUCLEOTIDE SEQUENCE [LARGE SCALE MRNA]</scope>
    <source>
        <strain>cv. Columbia</strain>
    </source>
</reference>
<reference key="4">
    <citation type="journal article" date="2009" name="DNA Res.">
        <title>Analysis of multiple occurrences of alternative splicing events in Arabidopsis thaliana using novel sequenced full-length cDNAs.</title>
        <authorList>
            <person name="Iida K."/>
            <person name="Fukami-Kobayashi K."/>
            <person name="Toyoda A."/>
            <person name="Sakaki Y."/>
            <person name="Kobayashi M."/>
            <person name="Seki M."/>
            <person name="Shinozaki K."/>
        </authorList>
    </citation>
    <scope>NUCLEOTIDE SEQUENCE [LARGE SCALE MRNA]</scope>
    <source>
        <strain>cv. Columbia</strain>
    </source>
</reference>
<reference key="5">
    <citation type="journal article" date="2003" name="Nature">
        <title>Control of leaf morphogenesis by microRNAs.</title>
        <authorList>
            <person name="Palatnik J.F."/>
            <person name="Allen E."/>
            <person name="Wu X."/>
            <person name="Schommer C."/>
            <person name="Schwab R."/>
            <person name="Carrington J.C."/>
            <person name="Weigel D."/>
        </authorList>
    </citation>
    <scope>FUNCTION</scope>
    <scope>INDUCTION</scope>
</reference>
<reference key="6">
    <citation type="journal article" date="2005" name="Development">
        <title>Genetic and molecular identification of genes required for female gametophyte development and function in Arabidopsis.</title>
        <authorList>
            <person name="Pagnussat G.C."/>
            <person name="Yu H.-J."/>
            <person name="Ngo Q.A."/>
            <person name="Rajani S."/>
            <person name="Mayalagu S."/>
            <person name="Johnson C.S."/>
            <person name="Capron A."/>
            <person name="Xie L.-F."/>
            <person name="Ye D."/>
            <person name="Sundaresan V."/>
        </authorList>
    </citation>
    <scope>FUNCTION</scope>
</reference>
<reference key="7">
    <citation type="journal article" date="2007" name="Plant Cell">
        <title>Arabidopsis BRANCHED1 acts as an integrator of branching signals within axillary buds.</title>
        <authorList>
            <person name="Aguilar-Martinez J.A."/>
            <person name="Poza-Carrion C."/>
            <person name="Cubas P."/>
        </authorList>
    </citation>
    <scope>GENE FAMILY</scope>
    <scope>NOMENCLATURE</scope>
</reference>
<reference key="8">
    <citation type="journal article" date="2007" name="Plant Cell">
        <title>TCP transcription factors control the morphology of shoot lateral organs via negative regulation of the expression of boundary-specific genes in Arabidopsis.</title>
        <authorList>
            <person name="Koyama T."/>
            <person name="Furutani M."/>
            <person name="Tasaka M."/>
            <person name="Ohme-Takagi M."/>
        </authorList>
    </citation>
    <scope>FUNCTION</scope>
    <scope>TISSUE SPECIFICITY</scope>
</reference>
<reference key="9">
    <citation type="journal article" date="2008" name="PLoS Biol.">
        <title>Control of jasmonate biosynthesis and senescence by miR319 targets.</title>
        <authorList>
            <person name="Schommer C."/>
            <person name="Palatnik J.F."/>
            <person name="Aggarwal P."/>
            <person name="Chetelat A."/>
            <person name="Cubas P."/>
            <person name="Farmer E.E."/>
            <person name="Nath U."/>
            <person name="Weigel D."/>
        </authorList>
    </citation>
    <scope>FUNCTION</scope>
    <scope>INDUCTION</scope>
</reference>
<reference key="10">
    <citation type="journal article" date="2013" name="Proc. Natl. Acad. Sci. U.S.A.">
        <title>Arabidopsis thaliana AHL family modulates hypocotyl growth redundantly by interacting with each other via the PPC/DUF296 domain.</title>
        <authorList>
            <person name="Zhao J."/>
            <person name="Favero D.S."/>
            <person name="Peng H."/>
            <person name="Neff M.M."/>
        </authorList>
    </citation>
    <scope>INTERACTION WITH AHL27 AND AHL29</scope>
</reference>
<reference key="11">
    <citation type="journal article" date="2014" name="J. Genet. Genomics">
        <title>SPOROCYTELESS is a novel embryophyte-specific transcription repressor that interacts with TPL and TCP proteins in Arabidopsis.</title>
        <authorList>
            <person name="Chen G.H."/>
            <person name="Sun J.Y."/>
            <person name="Liu M."/>
            <person name="Liu J."/>
            <person name="Yang W.C."/>
        </authorList>
    </citation>
    <scope>INTERACTION WITH SPL</scope>
</reference>
<reference key="12">
    <citation type="journal article" date="2015" name="Cell Res.">
        <title>The molecular mechanism of sporocyteless/nozzle in controlling Arabidopsis ovule development.</title>
        <authorList>
            <person name="Wei B."/>
            <person name="Zhang J."/>
            <person name="Pang C."/>
            <person name="Yu H."/>
            <person name="Guo D."/>
            <person name="Jiang H."/>
            <person name="Ding M."/>
            <person name="Chen Z."/>
            <person name="Tao Q."/>
            <person name="Gu H."/>
            <person name="Qu L.J."/>
            <person name="Qin G."/>
        </authorList>
    </citation>
    <scope>FUNCTION</scope>
    <scope>INTERACTION WITH SPL</scope>
    <scope>DEVELOPMENTAL STAGE</scope>
</reference>
<reference key="13">
    <citation type="journal article" date="2016" name="Plant Cell">
        <title>Activation of YUCCA5 by the transcription factor TCP4 integrates developmental and environmental signals to promote hypocotyl elongation in Arabidopsis.</title>
        <authorList>
            <person name="Challa K.R."/>
            <person name="Aggarwal P."/>
            <person name="Nath U."/>
        </authorList>
    </citation>
    <scope>FUNCTION</scope>
    <scope>INDUCTION</scope>
</reference>
<reference key="14">
    <citation type="journal article" date="2016" name="Plant Cell">
        <title>Arabidopsis JINGUBANG is a negative regulator of pollen germination that prevents pollination in moist environments.</title>
        <authorList>
            <person name="Ju Y."/>
            <person name="Guo L."/>
            <person name="Cai Q."/>
            <person name="Ma F."/>
            <person name="Zhu Q.Y."/>
            <person name="Zhang Q."/>
            <person name="Sodmergen S."/>
        </authorList>
    </citation>
    <scope>INTERACTION WITH JGB</scope>
</reference>
<reference key="15">
    <citation type="journal article" date="2017" name="PLoS Genet.">
        <title>TCP4-dependent induction of CONSTANS transcription requires GIGANTEA in photoperiodic flowering in Arabidopsis.</title>
        <authorList>
            <person name="Kubota A."/>
            <person name="Ito S."/>
            <person name="Shim J.S."/>
            <person name="Johnson R.S."/>
            <person name="Song Y.H."/>
            <person name="Breton G."/>
            <person name="Goralogia G.S."/>
            <person name="Kwon M.S."/>
            <person name="Laboy Cintron D."/>
            <person name="Koyama T."/>
            <person name="Ohme-Takagi M."/>
            <person name="Pruneda-Paz J.L."/>
            <person name="Kay S.A."/>
            <person name="MacCoss M.J."/>
            <person name="Imaizumi T."/>
        </authorList>
    </citation>
    <scope>FUNCTION</scope>
    <scope>INTERACTION WITH GI</scope>
    <scope>SUBCELLULAR LOCATION</scope>
</reference>
<reference key="16">
    <citation type="journal article" date="2018" name="Plant J.">
        <title>The TCP4 transcription factor regulates trichome cell differentiation by directly activating GLABROUS INFLORESCENCE STEMS in Arabidopsis thaliana.</title>
        <authorList>
            <person name="Vadde B.V.L."/>
            <person name="Challa K.R."/>
            <person name="Nath U."/>
        </authorList>
    </citation>
    <scope>FUNCTION</scope>
</reference>
<reference key="17">
    <citation type="journal article" date="2019" name="Plant Physiol.">
        <title>The TCP4 transcription factor directly activates TRICHOMELESS1 and 2 and suppresses trichome initiation.</title>
        <authorList>
            <person name="Vadde B.V.L."/>
            <person name="Challa K.R."/>
            <person name="Sunkara P."/>
            <person name="Hegde A.S."/>
            <person name="Nath U."/>
        </authorList>
    </citation>
    <scope>FUNCTION</scope>
</reference>
<reference key="18">
    <citation type="journal article" date="2019" name="PLoS Genet.">
        <title>The CIN-TCP transcription factors promote commitment to differentiation in Arabidopsis leaf pavement cells via both auxin-dependent and independent pathways.</title>
        <authorList>
            <person name="Challa K.R."/>
            <person name="Rath M."/>
            <person name="Nath U."/>
        </authorList>
    </citation>
    <scope>FUNCTION</scope>
</reference>
<protein>
    <recommendedName>
        <fullName>Transcription factor TCP4</fullName>
    </recommendedName>
    <alternativeName>
        <fullName>Protein MATERNAL EFFECT EMBRYO ARREST 35</fullName>
    </alternativeName>
</protein>
<keyword id="KW-0217">Developmental protein</keyword>
<keyword id="KW-0238">DNA-binding</keyword>
<keyword id="KW-0539">Nucleus</keyword>
<keyword id="KW-1185">Reference proteome</keyword>
<keyword id="KW-0804">Transcription</keyword>
<keyword id="KW-0805">Transcription regulation</keyword>
<proteinExistence type="evidence at protein level"/>
<dbReference type="EMBL" id="AP000370">
    <property type="protein sequence ID" value="BAA97066.1"/>
    <property type="status" value="ALT_INIT"/>
    <property type="molecule type" value="Genomic_DNA"/>
</dbReference>
<dbReference type="EMBL" id="CP002686">
    <property type="protein sequence ID" value="AEE75606.1"/>
    <property type="molecule type" value="Genomic_DNA"/>
</dbReference>
<dbReference type="EMBL" id="CP002686">
    <property type="protein sequence ID" value="AEE75607.1"/>
    <property type="molecule type" value="Genomic_DNA"/>
</dbReference>
<dbReference type="EMBL" id="CP002686">
    <property type="protein sequence ID" value="AEE75608.1"/>
    <property type="molecule type" value="Genomic_DNA"/>
</dbReference>
<dbReference type="EMBL" id="CP002686">
    <property type="protein sequence ID" value="ANM65437.1"/>
    <property type="molecule type" value="Genomic_DNA"/>
</dbReference>
<dbReference type="EMBL" id="AY094444">
    <property type="protein sequence ID" value="AAM19816.1"/>
    <property type="molecule type" value="mRNA"/>
</dbReference>
<dbReference type="EMBL" id="AY149957">
    <property type="protein sequence ID" value="AAN31111.1"/>
    <property type="molecule type" value="mRNA"/>
</dbReference>
<dbReference type="EMBL" id="AK316704">
    <property type="protein sequence ID" value="BAH19431.1"/>
    <property type="molecule type" value="mRNA"/>
</dbReference>
<dbReference type="RefSeq" id="NP_001189896.1">
    <property type="nucleotide sequence ID" value="NM_001202967.1"/>
</dbReference>
<dbReference type="RefSeq" id="NP_001319557.1">
    <property type="nucleotide sequence ID" value="NM_001338148.1"/>
</dbReference>
<dbReference type="RefSeq" id="NP_188121.1">
    <property type="nucleotide sequence ID" value="NM_112365.4"/>
</dbReference>
<dbReference type="RefSeq" id="NP_850589.1">
    <property type="nucleotide sequence ID" value="NM_180258.3"/>
</dbReference>
<dbReference type="SMR" id="Q8LPR5"/>
<dbReference type="BioGRID" id="6066">
    <property type="interactions" value="235"/>
</dbReference>
<dbReference type="FunCoup" id="Q8LPR5">
    <property type="interactions" value="505"/>
</dbReference>
<dbReference type="IntAct" id="Q8LPR5">
    <property type="interactions" value="223"/>
</dbReference>
<dbReference type="STRING" id="3702.Q8LPR5"/>
<dbReference type="GlyGen" id="Q8LPR5">
    <property type="glycosylation" value="1 site"/>
</dbReference>
<dbReference type="PaxDb" id="3702-AT3G15030.1"/>
<dbReference type="ProteomicsDB" id="234151"/>
<dbReference type="EnsemblPlants" id="AT3G15030.1">
    <property type="protein sequence ID" value="AT3G15030.1"/>
    <property type="gene ID" value="AT3G15030"/>
</dbReference>
<dbReference type="EnsemblPlants" id="AT3G15030.2">
    <property type="protein sequence ID" value="AT3G15030.2"/>
    <property type="gene ID" value="AT3G15030"/>
</dbReference>
<dbReference type="EnsemblPlants" id="AT3G15030.3">
    <property type="protein sequence ID" value="AT3G15030.3"/>
    <property type="gene ID" value="AT3G15030"/>
</dbReference>
<dbReference type="EnsemblPlants" id="AT3G15030.4">
    <property type="protein sequence ID" value="AT3G15030.4"/>
    <property type="gene ID" value="AT3G15030"/>
</dbReference>
<dbReference type="GeneID" id="820732"/>
<dbReference type="Gramene" id="AT3G15030.1">
    <property type="protein sequence ID" value="AT3G15030.1"/>
    <property type="gene ID" value="AT3G15030"/>
</dbReference>
<dbReference type="Gramene" id="AT3G15030.2">
    <property type="protein sequence ID" value="AT3G15030.2"/>
    <property type="gene ID" value="AT3G15030"/>
</dbReference>
<dbReference type="Gramene" id="AT3G15030.3">
    <property type="protein sequence ID" value="AT3G15030.3"/>
    <property type="gene ID" value="AT3G15030"/>
</dbReference>
<dbReference type="Gramene" id="AT3G15030.4">
    <property type="protein sequence ID" value="AT3G15030.4"/>
    <property type="gene ID" value="AT3G15030"/>
</dbReference>
<dbReference type="KEGG" id="ath:AT3G15030"/>
<dbReference type="Araport" id="AT3G15030"/>
<dbReference type="TAIR" id="AT3G15030">
    <property type="gene designation" value="TCP4"/>
</dbReference>
<dbReference type="eggNOG" id="ENOG502QRP9">
    <property type="taxonomic scope" value="Eukaryota"/>
</dbReference>
<dbReference type="HOGENOM" id="CLU_033594_0_0_1"/>
<dbReference type="InParanoid" id="Q8LPR5"/>
<dbReference type="OMA" id="PAWKPTI"/>
<dbReference type="OrthoDB" id="1927134at2759"/>
<dbReference type="PhylomeDB" id="Q8LPR5"/>
<dbReference type="PRO" id="PR:Q8LPR5"/>
<dbReference type="Proteomes" id="UP000006548">
    <property type="component" value="Chromosome 3"/>
</dbReference>
<dbReference type="ExpressionAtlas" id="Q8LPR5">
    <property type="expression patterns" value="baseline and differential"/>
</dbReference>
<dbReference type="GO" id="GO:0005634">
    <property type="term" value="C:nucleus"/>
    <property type="evidence" value="ECO:0007669"/>
    <property type="project" value="UniProtKB-SubCell"/>
</dbReference>
<dbReference type="GO" id="GO:0003677">
    <property type="term" value="F:DNA binding"/>
    <property type="evidence" value="ECO:0000314"/>
    <property type="project" value="TAIR"/>
</dbReference>
<dbReference type="GO" id="GO:0001216">
    <property type="term" value="F:DNA-binding transcription activator activity"/>
    <property type="evidence" value="ECO:0000315"/>
    <property type="project" value="TAIR"/>
</dbReference>
<dbReference type="GO" id="GO:0003700">
    <property type="term" value="F:DNA-binding transcription factor activity"/>
    <property type="evidence" value="ECO:0000250"/>
    <property type="project" value="TAIR"/>
</dbReference>
<dbReference type="GO" id="GO:1990837">
    <property type="term" value="F:sequence-specific double-stranded DNA binding"/>
    <property type="evidence" value="ECO:0000314"/>
    <property type="project" value="TAIR"/>
</dbReference>
<dbReference type="GO" id="GO:0048825">
    <property type="term" value="P:cotyledon development"/>
    <property type="evidence" value="ECO:0000315"/>
    <property type="project" value="TAIR"/>
</dbReference>
<dbReference type="GO" id="GO:0048826">
    <property type="term" value="P:cotyledon morphogenesis"/>
    <property type="evidence" value="ECO:0000316"/>
    <property type="project" value="TAIR"/>
</dbReference>
<dbReference type="GO" id="GO:0009793">
    <property type="term" value="P:embryo development ending in seed dormancy"/>
    <property type="evidence" value="ECO:0000315"/>
    <property type="project" value="TAIR"/>
</dbReference>
<dbReference type="GO" id="GO:0048366">
    <property type="term" value="P:leaf development"/>
    <property type="evidence" value="ECO:0000316"/>
    <property type="project" value="TAIR"/>
</dbReference>
<dbReference type="GO" id="GO:0010150">
    <property type="term" value="P:leaf senescence"/>
    <property type="evidence" value="ECO:0000316"/>
    <property type="project" value="TAIR"/>
</dbReference>
<dbReference type="GO" id="GO:0006355">
    <property type="term" value="P:regulation of DNA-templated transcription"/>
    <property type="evidence" value="ECO:0000304"/>
    <property type="project" value="TAIR"/>
</dbReference>
<dbReference type="InterPro" id="IPR017887">
    <property type="entry name" value="TF_TCP_subgr"/>
</dbReference>
<dbReference type="InterPro" id="IPR005333">
    <property type="entry name" value="Transcription_factor_TCP"/>
</dbReference>
<dbReference type="PANTHER" id="PTHR31072:SF273">
    <property type="entry name" value="TRANSCRIPTION FACTOR TCP4"/>
    <property type="match status" value="1"/>
</dbReference>
<dbReference type="PANTHER" id="PTHR31072">
    <property type="entry name" value="TRANSCRIPTION FACTOR TCP4-RELATED"/>
    <property type="match status" value="1"/>
</dbReference>
<dbReference type="Pfam" id="PF03634">
    <property type="entry name" value="TCP"/>
    <property type="match status" value="1"/>
</dbReference>
<dbReference type="PROSITE" id="PS51369">
    <property type="entry name" value="TCP"/>
    <property type="match status" value="1"/>
</dbReference>
<name>TCP4_ARATH</name>
<gene>
    <name type="primary">TCP4</name>
    <name type="synonym">MEE35</name>
    <name type="ordered locus">At3g15030</name>
    <name type="ORF">K15M2.17</name>
</gene>
<sequence>MSDDQFHHPPPPSSMRHRSTSDAADGGCGEIVEVQGGHIVRSTGRKDRHSKVCTAKGPRDRRVRLSAHTAIQFYDVQDRLGFDRPSKAVDWLIKKAKTSIDELAELPPWNPADAIRLAAANAKPRRTTAKTQISPSPPPPQQQQQQQQLQFGVGFNGGGAEHPSNNESSFLPPSMDSDSIADTIKSFFPVIGSSTEAPSNHNLMHNYHHQHPPDLLSRTNSQNQDLRLSLQSFPDGPPSLLHHQHHHHTSASASEPTLFYGQSNPLGFDTSSWEQQSSEFGRIQRLVAWNSGGGGGATDTGNGGGFLFAPPTPSTTSFQPVLGQSQQLYSQRGPLQSSYSPMIRAWFDPHHHHQSISTDDLNHHHHLPPPVHQSAIPGIGFASGEFSSGFRIPARFQGQEEEQHDGLTHKPSSASSISRH</sequence>
<accession>Q8LPR5</accession>
<accession>A0A178VD44</accession>
<accession>B9DFB4</accession>
<accession>Q9LKA2</accession>
<feature type="chain" id="PRO_0000330778" description="Transcription factor TCP4">
    <location>
        <begin position="1"/>
        <end position="420"/>
    </location>
</feature>
<feature type="domain" description="TCP" evidence="1">
    <location>
        <begin position="45"/>
        <end position="103"/>
    </location>
</feature>
<feature type="region of interest" description="Disordered" evidence="2">
    <location>
        <begin position="1"/>
        <end position="27"/>
    </location>
</feature>
<feature type="region of interest" description="Disordered" evidence="2">
    <location>
        <begin position="121"/>
        <end position="176"/>
    </location>
</feature>
<feature type="region of interest" description="Disordered" evidence="2">
    <location>
        <begin position="228"/>
        <end position="256"/>
    </location>
</feature>
<feature type="region of interest" description="Disordered" evidence="2">
    <location>
        <begin position="353"/>
        <end position="379"/>
    </location>
</feature>
<feature type="region of interest" description="Disordered" evidence="2">
    <location>
        <begin position="399"/>
        <end position="420"/>
    </location>
</feature>
<feature type="compositionally biased region" description="Polar residues" evidence="2">
    <location>
        <begin position="410"/>
        <end position="420"/>
    </location>
</feature>
<comment type="function">
    <text evidence="3 4 5 6 8 11 12 13 14 15">Transcription factor playing a pivotal role in the control of morphogenesis of shoot organs by negatively regulating the expression of boundary-specific genes such as CUC genes, probably through the induction of miRNA (e.g. miR164) (PubMed:12931144, PubMed:17307931). Required during early steps of embryogenesis (PubMed:15634699). Participates in ovule development (PubMed:25378179). Activates LOX2 expression by binding to the 5'-GGACCA-3' motif found in its promoter (PubMed:12931144, PubMed:15634699, PubMed:17307931, PubMed:18816164, PubMed:25378179). Activates YUC5 transcription by binding to the 5'-GTGGGCCA-3' motif found in its promoter (PubMed:27597774). Through the activation of YUC5 transcription, integrates the auxin response to a brassinosteroid-dependent molecular circuit that promotes cell elongation in hypocotyls (PubMed:27597774). Activates GIS transcription by binding to the 5'-TGGTCC-3' motif found in its promoter (PubMed:29165850). Involved in the regulation of trichome branching through the activation of GIS transcription (PubMed:29165850). Activates CO transcription by binding to the 5'-GGACCAC-3' motif found in its promoter (PubMed:28628608). Involved in the regulation of photoperiodic flowering through the activation of CO transcription (PubMed:28628608). Activates TCL1 and TCL2 transcription by binding to the 5'-TGGCCA-3' and 5'-GTGGACCA-3' motifS found in their respective promoters (PubMed:31575625). Involved in the suppression of trichome initiaition through the activation of TCL1 and TCL2 transcription (PubMed:31575625). Activates HAT2 transcription by binding to the 5'-TGGTCCAC-3' motif found in its promoter (PubMed:30742619). Through the activation of HAT2 transcription, involved in the auxin-independent reprogramming of mitotic cells to exit division and acquire differentiation competence within the transition zone (PubMed:30742619).</text>
</comment>
<comment type="subunit">
    <text evidence="7 8 9 10 12">Interacts with AHL27 and AHL29 (PubMed:24218605). Interacts with SPL (PubMed:25378179, PubMed:25527103). Interacts with JGB (PubMed:24218605, PubMed:25378179, PubMed:25527103, PubMed:27468890). Interacts with GI (via N-terminus) (PubMed:28628608).</text>
</comment>
<comment type="interaction">
    <interactant intactId="EBI-15192325">
        <id>Q8LPR5</id>
    </interactant>
    <interactant intactId="EBI-621986">
        <id>Q9SZJ6</id>
        <label>AGL21</label>
    </interactant>
    <organismsDiffer>false</organismsDiffer>
    <experiments>3</experiments>
</comment>
<comment type="interaction">
    <interactant intactId="EBI-15192325">
        <id>Q8LPR5</id>
    </interactant>
    <interactant intactId="EBI-622106">
        <id>Q9SA07</id>
        <label>AGL63</label>
    </interactant>
    <organismsDiffer>false</organismsDiffer>
    <experiments>4</experiments>
</comment>
<comment type="interaction">
    <interactant intactId="EBI-15192325">
        <id>Q8LPR5</id>
    </interactant>
    <interactant intactId="EBI-592003">
        <id>P35631</id>
        <label>AP1</label>
    </interactant>
    <organismsDiffer>false</organismsDiffer>
    <experiments>3</experiments>
</comment>
<comment type="interaction">
    <interactant intactId="EBI-15192325">
        <id>Q8LPR5</id>
    </interactant>
    <interactant intactId="EBI-15193303">
        <id>Q9SLA1</id>
        <label>At2g25620</label>
    </interactant>
    <organismsDiffer>false</organismsDiffer>
    <experiments>3</experiments>
</comment>
<comment type="interaction">
    <interactant intactId="EBI-15192325">
        <id>Q8LPR5</id>
    </interactant>
    <interactant intactId="EBI-4457957">
        <id>Q8GXR6</id>
        <label>At3g58630/F14P22_220</label>
    </interactant>
    <organismsDiffer>false</organismsDiffer>
    <experiments>3</experiments>
</comment>
<comment type="interaction">
    <interactant intactId="EBI-15192325">
        <id>Q8LPR5</id>
    </interactant>
    <interactant intactId="EBI-3387100">
        <id>Q9FMT4</id>
        <label>At5g14170</label>
    </interactant>
    <organismsDiffer>false</organismsDiffer>
    <experiments>3</experiments>
</comment>
<comment type="interaction">
    <interactant intactId="EBI-15192325">
        <id>Q8LPR5</id>
    </interactant>
    <interactant intactId="EBI-15191587">
        <id>F4K1A8</id>
        <label>At5g26749</label>
    </interactant>
    <organismsDiffer>false</organismsDiffer>
    <experiments>3</experiments>
</comment>
<comment type="interaction">
    <interactant intactId="EBI-15192325">
        <id>Q8LPR5</id>
    </interactant>
    <interactant intactId="EBI-1536772">
        <id>O04292</id>
        <label>ATHB-9</label>
    </interactant>
    <organismsDiffer>false</organismsDiffer>
    <experiments>3</experiments>
</comment>
<comment type="interaction">
    <interactant intactId="EBI-15192325">
        <id>Q8LPR5</id>
    </interactant>
    <interactant intactId="EBI-4475455">
        <id>Q9FG01</id>
        <label>ATO</label>
    </interactant>
    <organismsDiffer>false</organismsDiffer>
    <experiments>3</experiments>
</comment>
<comment type="interaction">
    <interactant intactId="EBI-15192325">
        <id>Q8LPR5</id>
    </interactant>
    <interactant intactId="EBI-15192959">
        <id>A0A178U8Q1</id>
        <label>AXX17_At5g59430</label>
    </interactant>
    <organismsDiffer>false</organismsDiffer>
    <experiments>4</experiments>
</comment>
<comment type="interaction">
    <interactant intactId="EBI-15192325">
        <id>Q8LPR5</id>
    </interactant>
    <interactant intactId="EBI-4427748">
        <id>Q7XJU2</id>
        <label>BHLH153</label>
    </interactant>
    <organismsDiffer>false</organismsDiffer>
    <experiments>3</experiments>
</comment>
<comment type="interaction">
    <interactant intactId="EBI-15192325">
        <id>Q8LPR5</id>
    </interactant>
    <interactant intactId="EBI-15192111">
        <id>Q8S3D1</id>
        <label>BHLH68</label>
    </interactant>
    <organismsDiffer>false</organismsDiffer>
    <experiments>3</experiments>
</comment>
<comment type="interaction">
    <interactant intactId="EBI-15192325">
        <id>Q8LPR5</id>
    </interactant>
    <interactant intactId="EBI-15192637">
        <id>Q9C7T4</id>
        <label>BHLH96</label>
    </interactant>
    <organismsDiffer>false</organismsDiffer>
    <experiments>3</experiments>
</comment>
<comment type="interaction">
    <interactant intactId="EBI-15192325">
        <id>Q8LPR5</id>
    </interactant>
    <interactant intactId="EBI-15201762">
        <id>Q9FMM7</id>
        <label>BZIP15</label>
    </interactant>
    <organismsDiffer>false</organismsDiffer>
    <experiments>3</experiments>
</comment>
<comment type="interaction">
    <interactant intactId="EBI-15192325">
        <id>Q8LPR5</id>
    </interactant>
    <interactant intactId="EBI-1237855">
        <id>Q9FMC2</id>
        <label>BZIP43</label>
    </interactant>
    <organismsDiffer>false</organismsDiffer>
    <experiments>3</experiments>
</comment>
<comment type="interaction">
    <interactant intactId="EBI-15192325">
        <id>Q8LPR5</id>
    </interactant>
    <interactant intactId="EBI-943044">
        <id>Q8RU59</id>
        <label>BZIP48</label>
    </interactant>
    <organismsDiffer>false</organismsDiffer>
    <experiments>3</experiments>
</comment>
<comment type="interaction">
    <interactant intactId="EBI-15192325">
        <id>Q8LPR5</id>
    </interactant>
    <interactant intactId="EBI-15193039">
        <id>Q9C9N3</id>
        <label>C3H14</label>
    </interactant>
    <organismsDiffer>false</organismsDiffer>
    <experiments>3</experiments>
</comment>
<comment type="interaction">
    <interactant intactId="EBI-15192325">
        <id>Q8LPR5</id>
    </interactant>
    <interactant intactId="EBI-962511">
        <id>A9LNK9</id>
        <label>CPSF30</label>
    </interactant>
    <organismsDiffer>false</organismsDiffer>
    <experiments>4</experiments>
</comment>
<comment type="interaction">
    <interactant intactId="EBI-15192325">
        <id>Q8LPR5</id>
    </interactant>
    <interactant intactId="EBI-15200862">
        <id>Q9SCQ6</id>
        <label>GAF1</label>
    </interactant>
    <organismsDiffer>false</organismsDiffer>
    <experiments>3</experiments>
</comment>
<comment type="interaction">
    <interactant intactId="EBI-15192325">
        <id>Q8LPR5</id>
    </interactant>
    <interactant intactId="EBI-1396623">
        <id>Q8L8A5</id>
        <label>GIF1</label>
    </interactant>
    <organismsDiffer>false</organismsDiffer>
    <experiments>3</experiments>
</comment>
<comment type="interaction">
    <interactant intactId="EBI-15192325">
        <id>Q8LPR5</id>
    </interactant>
    <interactant intactId="EBI-15195983">
        <id>Q84WI0</id>
        <label>GIS</label>
    </interactant>
    <organismsDiffer>false</organismsDiffer>
    <experiments>3</experiments>
</comment>
<comment type="interaction">
    <interactant intactId="EBI-15192325">
        <id>Q8LPR5</id>
    </interactant>
    <interactant intactId="EBI-15195911">
        <id>P46600</id>
        <label>HAT1</label>
    </interactant>
    <organismsDiffer>false</organismsDiffer>
    <experiments>3</experiments>
</comment>
<comment type="interaction">
    <interactant intactId="EBI-15192325">
        <id>Q8LPR5</id>
    </interactant>
    <interactant intactId="EBI-4448195">
        <id>P46601</id>
        <label>HAT2</label>
    </interactant>
    <organismsDiffer>false</organismsDiffer>
    <experiments>3</experiments>
</comment>
<comment type="interaction">
    <interactant intactId="EBI-15192325">
        <id>Q8LPR5</id>
    </interactant>
    <interactant intactId="EBI-4428728">
        <id>Q05466</id>
        <label>HAT4</label>
    </interactant>
    <organismsDiffer>false</organismsDiffer>
    <experiments>3</experiments>
</comment>
<comment type="interaction">
    <interactant intactId="EBI-15192325">
        <id>Q8LPR5</id>
    </interactant>
    <interactant intactId="EBI-1536734">
        <id>Q9LXD8</id>
        <label>HEC3</label>
    </interactant>
    <organismsDiffer>false</organismsDiffer>
    <experiments>3</experiments>
</comment>
<comment type="interaction">
    <interactant intactId="EBI-15192325">
        <id>Q8LPR5</id>
    </interactant>
    <interactant intactId="EBI-15192423">
        <id>F4JRB0-2</id>
        <label>HHO5</label>
    </interactant>
    <organismsDiffer>false</organismsDiffer>
    <experiments>3</experiments>
</comment>
<comment type="interaction">
    <interactant intactId="EBI-15192325">
        <id>Q8LPR5</id>
    </interactant>
    <interactant intactId="EBI-15192145">
        <id>O22230</id>
        <label>HSFB3</label>
    </interactant>
    <organismsDiffer>false</organismsDiffer>
    <experiments>3</experiments>
</comment>
<comment type="interaction">
    <interactant intactId="EBI-15192325">
        <id>Q8LPR5</id>
    </interactant>
    <interactant intactId="EBI-632243">
        <id>P93830</id>
        <label>IAA17</label>
    </interactant>
    <organismsDiffer>false</organismsDiffer>
    <experiments>3</experiments>
</comment>
<comment type="interaction">
    <interactant intactId="EBI-15192325">
        <id>Q8LPR5</id>
    </interactant>
    <interactant intactId="EBI-3946459">
        <id>Q9C5X0</id>
        <label>IAA34</label>
    </interactant>
    <organismsDiffer>false</organismsDiffer>
    <experiments>3</experiments>
</comment>
<comment type="interaction">
    <interactant intactId="EBI-15192325">
        <id>Q8LPR5</id>
    </interactant>
    <interactant intactId="EBI-15193585">
        <id>Q9SN23</id>
        <label>LBD38</label>
    </interactant>
    <organismsDiffer>false</organismsDiffer>
    <experiments>3</experiments>
</comment>
<comment type="interaction">
    <interactant intactId="EBI-15192325">
        <id>Q8LPR5</id>
    </interactant>
    <interactant intactId="EBI-15194891">
        <id>Q9FML4</id>
        <label>LOB</label>
    </interactant>
    <organismsDiffer>false</organismsDiffer>
    <experiments>3</experiments>
</comment>
<comment type="interaction">
    <interactant intactId="EBI-15192325">
        <id>Q8LPR5</id>
    </interactant>
    <interactant intactId="EBI-15205450">
        <id>O80438</id>
        <label>MAK3</label>
    </interactant>
    <organismsDiffer>false</organismsDiffer>
    <experiments>3</experiments>
</comment>
<comment type="interaction">
    <interactant intactId="EBI-15192325">
        <id>Q8LPR5</id>
    </interactant>
    <interactant intactId="EBI-15194831">
        <id>Q9FL64</id>
        <label>MDK4.18</label>
    </interactant>
    <organismsDiffer>false</organismsDiffer>
    <experiments>3</experiments>
</comment>
<comment type="interaction">
    <interactant intactId="EBI-15192325">
        <id>Q8LPR5</id>
    </interactant>
    <interactant intactId="EBI-15202260">
        <id>Q9SEZ4</id>
        <label>MYB105</label>
    </interactant>
    <organismsDiffer>false</organismsDiffer>
    <experiments>3</experiments>
</comment>
<comment type="interaction">
    <interactant intactId="EBI-15192325">
        <id>Q8LPR5</id>
    </interactant>
    <interactant intactId="EBI-2466050">
        <id>Q8L4B2</id>
        <label>NFYC9</label>
    </interactant>
    <organismsDiffer>false</organismsDiffer>
    <experiments>3</experiments>
</comment>
<comment type="interaction">
    <interactant intactId="EBI-15192325">
        <id>Q8LPR5</id>
    </interactant>
    <interactant intactId="EBI-15193025">
        <id>Q9LXU1</id>
        <label>NOT9B</label>
    </interactant>
    <organismsDiffer>false</organismsDiffer>
    <experiments>3</experiments>
</comment>
<comment type="interaction">
    <interactant intactId="EBI-15192325">
        <id>Q8LPR5</id>
    </interactant>
    <interactant intactId="EBI-1775691">
        <id>Q9FIX8</id>
        <label>PCFS5</label>
    </interactant>
    <organismsDiffer>false</organismsDiffer>
    <experiments>3</experiments>
</comment>
<comment type="interaction">
    <interactant intactId="EBI-15192325">
        <id>Q8LPR5</id>
    </interactant>
    <interactant intactId="EBI-15198339">
        <id>Q9FG68</id>
        <label>RAX1</label>
    </interactant>
    <organismsDiffer>false</organismsDiffer>
    <experiments>3</experiments>
</comment>
<comment type="interaction">
    <interactant intactId="EBI-15192325">
        <id>Q8LPR5</id>
    </interactant>
    <interactant intactId="EBI-1238472">
        <id>Q9S7H5</id>
        <label>SCL21</label>
    </interactant>
    <organismsDiffer>false</organismsDiffer>
    <experiments>3</experiments>
</comment>
<comment type="interaction">
    <interactant intactId="EBI-15192325">
        <id>Q8LPR5</id>
    </interactant>
    <interactant intactId="EBI-15205274">
        <id>Q9XGX0</id>
        <label>SHI</label>
    </interactant>
    <organismsDiffer>false</organismsDiffer>
    <experiments>3</experiments>
</comment>
<comment type="interaction">
    <interactant intactId="EBI-15192325">
        <id>Q8LPR5</id>
    </interactant>
    <interactant intactId="EBI-15196945">
        <id>Q9M2Q6</id>
        <label>SPL15</label>
    </interactant>
    <organismsDiffer>false</organismsDiffer>
    <experiments>3</experiments>
</comment>
<comment type="interaction">
    <interactant intactId="EBI-15192325">
        <id>Q8LPR5</id>
    </interactant>
    <interactant intactId="EBI-15192995">
        <id>O65517</id>
        <label>SRS2</label>
    </interactant>
    <organismsDiffer>false</organismsDiffer>
    <experiments>3</experiments>
</comment>
<comment type="interaction">
    <interactant intactId="EBI-15192325">
        <id>Q8LPR5</id>
    </interactant>
    <interactant intactId="EBI-15193733">
        <id>Q9SI19</id>
        <label>SRS4</label>
    </interactant>
    <organismsDiffer>false</organismsDiffer>
    <experiments>3</experiments>
</comment>
<comment type="interaction">
    <interactant intactId="EBI-15192325">
        <id>Q8LPR5</id>
    </interactant>
    <interactant intactId="EBI-15192327">
        <id>Q9LEZ9</id>
        <label>TCP17</label>
    </interactant>
    <organismsDiffer>false</organismsDiffer>
    <experiments>3</experiments>
</comment>
<comment type="interaction">
    <interactant intactId="EBI-15192325">
        <id>Q8LPR5</id>
    </interactant>
    <interactant intactId="EBI-541400">
        <id>Q93ZE2</id>
        <label>TGA7</label>
    </interactant>
    <organismsDiffer>false</organismsDiffer>
    <experiments>3</experiments>
</comment>
<comment type="interaction">
    <interactant intactId="EBI-15192325">
        <id>Q8LPR5</id>
    </interactant>
    <interactant intactId="EBI-1237844">
        <id>Q93XM6</id>
        <label>TGA9</label>
    </interactant>
    <organismsDiffer>false</organismsDiffer>
    <experiments>3</experiments>
</comment>
<comment type="interaction">
    <interactant intactId="EBI-15192325">
        <id>Q8LPR5</id>
    </interactant>
    <interactant intactId="EBI-15202554">
        <id>Q9FH95</id>
        <label>TOE3</label>
    </interactant>
    <organismsDiffer>false</organismsDiffer>
    <experiments>3</experiments>
</comment>
<comment type="interaction">
    <interactant intactId="EBI-15192325">
        <id>Q8LPR5</id>
    </interactant>
    <interactant intactId="EBI-15199115">
        <id>Q9SIB4</id>
        <label>WOX3</label>
    </interactant>
    <organismsDiffer>false</organismsDiffer>
    <experiments>3</experiments>
</comment>
<comment type="interaction">
    <interactant intactId="EBI-15192325">
        <id>Q8LPR5</id>
    </interactant>
    <interactant intactId="EBI-4459694">
        <id>Q6X7J9</id>
        <label>WOX4</label>
    </interactant>
    <organismsDiffer>false</organismsDiffer>
    <experiments>3</experiments>
</comment>
<comment type="interaction">
    <interactant intactId="EBI-15192325">
        <id>Q8LPR5</id>
    </interactant>
    <interactant intactId="EBI-15195723">
        <id>Q9S763</id>
        <label>WRKY45</label>
    </interactant>
    <organismsDiffer>false</organismsDiffer>
    <experiments>3</experiments>
</comment>
<comment type="interaction">
    <interactant intactId="EBI-15192325">
        <id>Q8LPR5</id>
    </interactant>
    <interactant intactId="EBI-2119269">
        <id>Q9SB92</id>
        <label>WUS</label>
    </interactant>
    <organismsDiffer>false</organismsDiffer>
    <experiments>3</experiments>
</comment>
<comment type="interaction">
    <interactant intactId="EBI-15192325">
        <id>Q8LPR5</id>
    </interactant>
    <interactant intactId="EBI-1115523">
        <id>Q9LDT3</id>
        <label>YAB4</label>
    </interactant>
    <organismsDiffer>false</organismsDiffer>
    <experiments>3</experiments>
</comment>
<comment type="interaction">
    <interactant intactId="EBI-15192325">
        <id>Q8LPR5</id>
    </interactant>
    <interactant intactId="EBI-15197231">
        <id>Q39264</id>
        <label>ZFP5</label>
    </interactant>
    <organismsDiffer>false</organismsDiffer>
    <experiments>3</experiments>
</comment>
<comment type="subcellular location">
    <subcellularLocation>
        <location evidence="12">Nucleus</location>
    </subcellularLocation>
</comment>
<comment type="tissue specificity">
    <text evidence="5">Expressed in cotyledons, particularly in the vascular region, in leaves, roots, buds, flowers and immature siliques.</text>
</comment>
<comment type="developmental stage">
    <text evidence="8">Expressed in cotyledons during embryogenesis. Expressed during ovule development (PubMed:25378179).</text>
</comment>
<comment type="induction">
    <text evidence="3 6 11">Repressed by the miRNA miR-JAW/miR319.</text>
</comment>
<comment type="sequence caution" evidence="16">
    <conflict type="erroneous initiation">
        <sequence resource="EMBL-CDS" id="BAA97066"/>
    </conflict>
    <text>Truncated N-terminus.</text>
</comment>
<organism>
    <name type="scientific">Arabidopsis thaliana</name>
    <name type="common">Mouse-ear cress</name>
    <dbReference type="NCBI Taxonomy" id="3702"/>
    <lineage>
        <taxon>Eukaryota</taxon>
        <taxon>Viridiplantae</taxon>
        <taxon>Streptophyta</taxon>
        <taxon>Embryophyta</taxon>
        <taxon>Tracheophyta</taxon>
        <taxon>Spermatophyta</taxon>
        <taxon>Magnoliopsida</taxon>
        <taxon>eudicotyledons</taxon>
        <taxon>Gunneridae</taxon>
        <taxon>Pentapetalae</taxon>
        <taxon>rosids</taxon>
        <taxon>malvids</taxon>
        <taxon>Brassicales</taxon>
        <taxon>Brassicaceae</taxon>
        <taxon>Camelineae</taxon>
        <taxon>Arabidopsis</taxon>
    </lineage>
</organism>
<evidence type="ECO:0000255" key="1">
    <source>
        <dbReference type="PROSITE-ProRule" id="PRU00701"/>
    </source>
</evidence>
<evidence type="ECO:0000256" key="2">
    <source>
        <dbReference type="SAM" id="MobiDB-lite"/>
    </source>
</evidence>
<evidence type="ECO:0000269" key="3">
    <source>
    </source>
</evidence>
<evidence type="ECO:0000269" key="4">
    <source>
    </source>
</evidence>
<evidence type="ECO:0000269" key="5">
    <source>
    </source>
</evidence>
<evidence type="ECO:0000269" key="6">
    <source>
    </source>
</evidence>
<evidence type="ECO:0000269" key="7">
    <source>
    </source>
</evidence>
<evidence type="ECO:0000269" key="8">
    <source>
    </source>
</evidence>
<evidence type="ECO:0000269" key="9">
    <source>
    </source>
</evidence>
<evidence type="ECO:0000269" key="10">
    <source>
    </source>
</evidence>
<evidence type="ECO:0000269" key="11">
    <source>
    </source>
</evidence>
<evidence type="ECO:0000269" key="12">
    <source>
    </source>
</evidence>
<evidence type="ECO:0000269" key="13">
    <source>
    </source>
</evidence>
<evidence type="ECO:0000269" key="14">
    <source>
    </source>
</evidence>
<evidence type="ECO:0000269" key="15">
    <source>
    </source>
</evidence>
<evidence type="ECO:0000305" key="16"/>